<sequence length="250" mass="27867">MSTLLEKTRKVNRILQKTGIQPVDFNEMASILKDVIEANVYILSRKGKVLGYSILKDYGNDIFAQSKIIPEEYNDKLLRVTETLANDKGNLFKEDKILSDLILTIVPVNGGGDRLGTLVLSRGVKEFTDDDLILAEYGATVVGLEILRSKNEEIEDEARKRAVVQMALGTLSYSELEAIKNIFEELNGKEGLLVASKIADKVGITRSVIVNALRKFESAGIIESRSLGMKGTHIRVLNDKLLEELEKMKR</sequence>
<keyword id="KW-0963">Cytoplasm</keyword>
<keyword id="KW-0238">DNA-binding</keyword>
<keyword id="KW-0678">Repressor</keyword>
<keyword id="KW-0804">Transcription</keyword>
<keyword id="KW-0805">Transcription regulation</keyword>
<dbReference type="EMBL" id="CP000923">
    <property type="protein sequence ID" value="ABY92983.1"/>
    <property type="molecule type" value="Genomic_DNA"/>
</dbReference>
<dbReference type="RefSeq" id="WP_009052418.1">
    <property type="nucleotide sequence ID" value="NC_010320.1"/>
</dbReference>
<dbReference type="SMR" id="B0K1T5"/>
<dbReference type="KEGG" id="tex:Teth514_1697"/>
<dbReference type="HOGENOM" id="CLU_089581_0_0_9"/>
<dbReference type="Proteomes" id="UP000002155">
    <property type="component" value="Chromosome"/>
</dbReference>
<dbReference type="GO" id="GO:0005737">
    <property type="term" value="C:cytoplasm"/>
    <property type="evidence" value="ECO:0007669"/>
    <property type="project" value="UniProtKB-SubCell"/>
</dbReference>
<dbReference type="GO" id="GO:0003677">
    <property type="term" value="F:DNA binding"/>
    <property type="evidence" value="ECO:0007669"/>
    <property type="project" value="UniProtKB-UniRule"/>
</dbReference>
<dbReference type="GO" id="GO:0003700">
    <property type="term" value="F:DNA-binding transcription factor activity"/>
    <property type="evidence" value="ECO:0007669"/>
    <property type="project" value="InterPro"/>
</dbReference>
<dbReference type="GO" id="GO:0005525">
    <property type="term" value="F:GTP binding"/>
    <property type="evidence" value="ECO:0007669"/>
    <property type="project" value="InterPro"/>
</dbReference>
<dbReference type="GO" id="GO:0045892">
    <property type="term" value="P:negative regulation of DNA-templated transcription"/>
    <property type="evidence" value="ECO:0007669"/>
    <property type="project" value="UniProtKB-UniRule"/>
</dbReference>
<dbReference type="FunFam" id="1.10.10.10:FF:000034">
    <property type="entry name" value="GTP-sensing transcriptional pleiotropic repressor CodY"/>
    <property type="match status" value="1"/>
</dbReference>
<dbReference type="Gene3D" id="3.30.450.40">
    <property type="match status" value="1"/>
</dbReference>
<dbReference type="Gene3D" id="1.10.10.10">
    <property type="entry name" value="Winged helix-like DNA-binding domain superfamily/Winged helix DNA-binding domain"/>
    <property type="match status" value="1"/>
</dbReference>
<dbReference type="HAMAP" id="MF_00621">
    <property type="entry name" value="HTH_type_CodY"/>
    <property type="match status" value="1"/>
</dbReference>
<dbReference type="InterPro" id="IPR014154">
    <property type="entry name" value="CodY"/>
</dbReference>
<dbReference type="InterPro" id="IPR029016">
    <property type="entry name" value="GAF-like_dom_sf"/>
</dbReference>
<dbReference type="InterPro" id="IPR013198">
    <property type="entry name" value="GTP_trans_reg_CodY_C"/>
</dbReference>
<dbReference type="InterPro" id="IPR010312">
    <property type="entry name" value="Transc_reg_CodY_N"/>
</dbReference>
<dbReference type="InterPro" id="IPR036388">
    <property type="entry name" value="WH-like_DNA-bd_sf"/>
</dbReference>
<dbReference type="InterPro" id="IPR036390">
    <property type="entry name" value="WH_DNA-bd_sf"/>
</dbReference>
<dbReference type="NCBIfam" id="TIGR02787">
    <property type="entry name" value="codY_Gpos"/>
    <property type="match status" value="1"/>
</dbReference>
<dbReference type="NCBIfam" id="NF003170">
    <property type="entry name" value="PRK04158.1"/>
    <property type="match status" value="1"/>
</dbReference>
<dbReference type="PANTHER" id="PTHR40062:SF1">
    <property type="entry name" value="GLOBAL TRANSCRIPTIONAL REGULATOR CODY"/>
    <property type="match status" value="1"/>
</dbReference>
<dbReference type="PANTHER" id="PTHR40062">
    <property type="entry name" value="GTP-SENSING TRANSCRIPTIONAL PLEIOTROPIC REPRESSOR CODY"/>
    <property type="match status" value="1"/>
</dbReference>
<dbReference type="Pfam" id="PF06018">
    <property type="entry name" value="CodY"/>
    <property type="match status" value="1"/>
</dbReference>
<dbReference type="Pfam" id="PF08222">
    <property type="entry name" value="HTH_CodY"/>
    <property type="match status" value="1"/>
</dbReference>
<dbReference type="PIRSF" id="PIRSF011572">
    <property type="entry name" value="GTP_sensing_CodY"/>
    <property type="match status" value="1"/>
</dbReference>
<dbReference type="SUPFAM" id="SSF46785">
    <property type="entry name" value="Winged helix' DNA-binding domain"/>
    <property type="match status" value="1"/>
</dbReference>
<comment type="function">
    <text evidence="1">DNA-binding global transcriptional regulator which is involved in the adaptive response to starvation and acts by directly or indirectly controlling the expression of numerous genes in response to nutrient availability. During rapid exponential growth, CodY is highly active and represses genes whose products allow adaptation to nutrient depletion.</text>
</comment>
<comment type="subcellular location">
    <subcellularLocation>
        <location evidence="1">Cytoplasm</location>
    </subcellularLocation>
</comment>
<comment type="similarity">
    <text evidence="1">Belongs to the CodY family.</text>
</comment>
<proteinExistence type="inferred from homology"/>
<feature type="chain" id="PRO_1000130462" description="Global transcriptional regulator CodY">
    <location>
        <begin position="1"/>
        <end position="250"/>
    </location>
</feature>
<feature type="DNA-binding region" description="H-T-H motif" evidence="1">
    <location>
        <begin position="195"/>
        <end position="214"/>
    </location>
</feature>
<feature type="region of interest" description="GAF domain" evidence="1">
    <location>
        <begin position="1"/>
        <end position="147"/>
    </location>
</feature>
<accession>B0K1T5</accession>
<reference key="1">
    <citation type="submission" date="2008-01" db="EMBL/GenBank/DDBJ databases">
        <title>Complete sequence of Thermoanaerobacter sp. X514.</title>
        <authorList>
            <consortium name="US DOE Joint Genome Institute"/>
            <person name="Copeland A."/>
            <person name="Lucas S."/>
            <person name="Lapidus A."/>
            <person name="Barry K."/>
            <person name="Glavina del Rio T."/>
            <person name="Dalin E."/>
            <person name="Tice H."/>
            <person name="Pitluck S."/>
            <person name="Bruce D."/>
            <person name="Goodwin L."/>
            <person name="Saunders E."/>
            <person name="Brettin T."/>
            <person name="Detter J.C."/>
            <person name="Han C."/>
            <person name="Schmutz J."/>
            <person name="Larimer F."/>
            <person name="Land M."/>
            <person name="Hauser L."/>
            <person name="Kyrpides N."/>
            <person name="Kim E."/>
            <person name="Hemme C."/>
            <person name="Fields M.W."/>
            <person name="He Z."/>
            <person name="Zhou J."/>
            <person name="Richardson P."/>
        </authorList>
    </citation>
    <scope>NUCLEOTIDE SEQUENCE [LARGE SCALE GENOMIC DNA]</scope>
    <source>
        <strain>X514</strain>
    </source>
</reference>
<name>CODY_THEPX</name>
<protein>
    <recommendedName>
        <fullName evidence="1">Global transcriptional regulator CodY</fullName>
    </recommendedName>
</protein>
<evidence type="ECO:0000255" key="1">
    <source>
        <dbReference type="HAMAP-Rule" id="MF_00621"/>
    </source>
</evidence>
<organism>
    <name type="scientific">Thermoanaerobacter sp. (strain X514)</name>
    <dbReference type="NCBI Taxonomy" id="399726"/>
    <lineage>
        <taxon>Bacteria</taxon>
        <taxon>Bacillati</taxon>
        <taxon>Bacillota</taxon>
        <taxon>Clostridia</taxon>
        <taxon>Thermoanaerobacterales</taxon>
        <taxon>Thermoanaerobacteraceae</taxon>
        <taxon>Thermoanaerobacter</taxon>
    </lineage>
</organism>
<gene>
    <name evidence="1" type="primary">codY</name>
    <name type="ordered locus">Teth514_1697</name>
</gene>